<organism>
    <name type="scientific">Halalkalibacterium halodurans (strain ATCC BAA-125 / DSM 18197 / FERM 7344 / JCM 9153 / C-125)</name>
    <name type="common">Bacillus halodurans</name>
    <dbReference type="NCBI Taxonomy" id="272558"/>
    <lineage>
        <taxon>Bacteria</taxon>
        <taxon>Bacillati</taxon>
        <taxon>Bacillota</taxon>
        <taxon>Bacilli</taxon>
        <taxon>Bacillales</taxon>
        <taxon>Bacillaceae</taxon>
        <taxon>Halalkalibacterium (ex Joshi et al. 2022)</taxon>
    </lineage>
</organism>
<comment type="similarity">
    <text evidence="1">Belongs to the UPF0302 family.</text>
</comment>
<accession>Q9KCA3</accession>
<reference key="1">
    <citation type="journal article" date="2000" name="Nucleic Acids Res.">
        <title>Complete genome sequence of the alkaliphilic bacterium Bacillus halodurans and genomic sequence comparison with Bacillus subtilis.</title>
        <authorList>
            <person name="Takami H."/>
            <person name="Nakasone K."/>
            <person name="Takaki Y."/>
            <person name="Maeno G."/>
            <person name="Sasaki R."/>
            <person name="Masui N."/>
            <person name="Fuji F."/>
            <person name="Hirama C."/>
            <person name="Nakamura Y."/>
            <person name="Ogasawara N."/>
            <person name="Kuhara S."/>
            <person name="Horikoshi K."/>
        </authorList>
    </citation>
    <scope>NUCLEOTIDE SEQUENCE [LARGE SCALE GENOMIC DNA]</scope>
    <source>
        <strain>ATCC BAA-125 / DSM 18197 / FERM 7344 / JCM 9153 / C-125</strain>
    </source>
</reference>
<gene>
    <name type="ordered locus">BH1670</name>
</gene>
<evidence type="ECO:0000255" key="1">
    <source>
        <dbReference type="HAMAP-Rule" id="MF_00760"/>
    </source>
</evidence>
<proteinExistence type="inferred from homology"/>
<sequence>MDGIIPVVEKKDFLRWFLKEFTLKKRECSWLLNYLMSDDDLMENVHFVEEAERCPKALIMSTNDVHTVPFCFHKYQQVTMDAEKAFHDIRMNPEEAIYIQLHFSGAKHNPNYIAVLEDNPYVPENEDLIAKQKKLAEAFLERSVQSFEEKELLRRIDEALDARDKETFLTLSQQLQHLRQHSD</sequence>
<keyword id="KW-1185">Reference proteome</keyword>
<name>Y1670_HALH5</name>
<protein>
    <recommendedName>
        <fullName evidence="1">UPF0302 protein BH1670</fullName>
    </recommendedName>
</protein>
<feature type="chain" id="PRO_0000216097" description="UPF0302 protein BH1670">
    <location>
        <begin position="1"/>
        <end position="183"/>
    </location>
</feature>
<dbReference type="EMBL" id="BA000004">
    <property type="protein sequence ID" value="BAB05389.1"/>
    <property type="molecule type" value="Genomic_DNA"/>
</dbReference>
<dbReference type="PIR" id="F83858">
    <property type="entry name" value="F83858"/>
</dbReference>
<dbReference type="RefSeq" id="WP_010897832.1">
    <property type="nucleotide sequence ID" value="NC_002570.2"/>
</dbReference>
<dbReference type="SMR" id="Q9KCA3"/>
<dbReference type="STRING" id="272558.gene:10727568"/>
<dbReference type="GeneID" id="87597288"/>
<dbReference type="KEGG" id="bha:BH1670"/>
<dbReference type="eggNOG" id="COG5582">
    <property type="taxonomic scope" value="Bacteria"/>
</dbReference>
<dbReference type="HOGENOM" id="CLU_126019_0_0_9"/>
<dbReference type="OrthoDB" id="2155814at2"/>
<dbReference type="Proteomes" id="UP000001258">
    <property type="component" value="Chromosome"/>
</dbReference>
<dbReference type="Gene3D" id="3.40.1530.30">
    <property type="entry name" value="Uncharacterised family UPF0302, N-terminal domain"/>
    <property type="match status" value="1"/>
</dbReference>
<dbReference type="Gene3D" id="4.10.810.10">
    <property type="entry name" value="Virus Scaffolding Protein, Chain A"/>
    <property type="match status" value="1"/>
</dbReference>
<dbReference type="HAMAP" id="MF_00760">
    <property type="entry name" value="UPF0302"/>
    <property type="match status" value="1"/>
</dbReference>
<dbReference type="InterPro" id="IPR014957">
    <property type="entry name" value="IDEAL_dom"/>
</dbReference>
<dbReference type="InterPro" id="IPR011188">
    <property type="entry name" value="UPF0302"/>
</dbReference>
<dbReference type="InterPro" id="IPR014963">
    <property type="entry name" value="UPF0302_N"/>
</dbReference>
<dbReference type="InterPro" id="IPR038091">
    <property type="entry name" value="UPF0302_N_sf"/>
</dbReference>
<dbReference type="InterPro" id="IPR027393">
    <property type="entry name" value="Virus_scaffolding_prot_C"/>
</dbReference>
<dbReference type="NCBIfam" id="NF002965">
    <property type="entry name" value="PRK03636.1"/>
    <property type="match status" value="1"/>
</dbReference>
<dbReference type="Pfam" id="PF08858">
    <property type="entry name" value="IDEAL"/>
    <property type="match status" value="1"/>
</dbReference>
<dbReference type="Pfam" id="PF08864">
    <property type="entry name" value="UPF0302"/>
    <property type="match status" value="1"/>
</dbReference>
<dbReference type="PIRSF" id="PIRSF007165">
    <property type="entry name" value="UCP007165"/>
    <property type="match status" value="1"/>
</dbReference>
<dbReference type="SMART" id="SM00914">
    <property type="entry name" value="IDEAL"/>
    <property type="match status" value="1"/>
</dbReference>